<reference key="1">
    <citation type="submission" date="2008-04" db="EMBL/GenBank/DDBJ databases">
        <title>Complete sequence of Clostridium botulinum strain Eklund.</title>
        <authorList>
            <person name="Brinkac L.M."/>
            <person name="Brown J.L."/>
            <person name="Bruce D."/>
            <person name="Detter C."/>
            <person name="Munk C."/>
            <person name="Smith L.A."/>
            <person name="Smith T.J."/>
            <person name="Sutton G."/>
            <person name="Brettin T.S."/>
        </authorList>
    </citation>
    <scope>NUCLEOTIDE SEQUENCE [LARGE SCALE GENOMIC DNA]</scope>
    <source>
        <strain>Eklund 17B / Type B</strain>
    </source>
</reference>
<keyword id="KW-0479">Metal-binding</keyword>
<keyword id="KW-0687">Ribonucleoprotein</keyword>
<keyword id="KW-0689">Ribosomal protein</keyword>
<keyword id="KW-0694">RNA-binding</keyword>
<keyword id="KW-0699">rRNA-binding</keyword>
<keyword id="KW-0862">Zinc</keyword>
<gene>
    <name evidence="1" type="primary">rpmE</name>
    <name type="ordered locus">CLL_A0479</name>
</gene>
<evidence type="ECO:0000255" key="1">
    <source>
        <dbReference type="HAMAP-Rule" id="MF_00501"/>
    </source>
</evidence>
<evidence type="ECO:0000305" key="2"/>
<sequence length="69" mass="7761">MKQGIHPEYHTDAVVKCACGNSFTTGSVKEELKVEICSKCHPFFTGKQKIVDVGGRVEKFNKRFNLDTK</sequence>
<dbReference type="EMBL" id="CP001056">
    <property type="protein sequence ID" value="ACD24516.1"/>
    <property type="molecule type" value="Genomic_DNA"/>
</dbReference>
<dbReference type="SMR" id="B2TJY1"/>
<dbReference type="KEGG" id="cbk:CLL_A0479"/>
<dbReference type="PATRIC" id="fig|935198.13.peg.434"/>
<dbReference type="HOGENOM" id="CLU_114306_4_3_9"/>
<dbReference type="Proteomes" id="UP000001195">
    <property type="component" value="Chromosome"/>
</dbReference>
<dbReference type="GO" id="GO:1990904">
    <property type="term" value="C:ribonucleoprotein complex"/>
    <property type="evidence" value="ECO:0007669"/>
    <property type="project" value="UniProtKB-KW"/>
</dbReference>
<dbReference type="GO" id="GO:0005840">
    <property type="term" value="C:ribosome"/>
    <property type="evidence" value="ECO:0007669"/>
    <property type="project" value="UniProtKB-KW"/>
</dbReference>
<dbReference type="GO" id="GO:0046872">
    <property type="term" value="F:metal ion binding"/>
    <property type="evidence" value="ECO:0007669"/>
    <property type="project" value="UniProtKB-KW"/>
</dbReference>
<dbReference type="GO" id="GO:0019843">
    <property type="term" value="F:rRNA binding"/>
    <property type="evidence" value="ECO:0007669"/>
    <property type="project" value="UniProtKB-KW"/>
</dbReference>
<dbReference type="GO" id="GO:0003735">
    <property type="term" value="F:structural constituent of ribosome"/>
    <property type="evidence" value="ECO:0007669"/>
    <property type="project" value="InterPro"/>
</dbReference>
<dbReference type="GO" id="GO:0006412">
    <property type="term" value="P:translation"/>
    <property type="evidence" value="ECO:0007669"/>
    <property type="project" value="UniProtKB-UniRule"/>
</dbReference>
<dbReference type="Gene3D" id="4.10.830.30">
    <property type="entry name" value="Ribosomal protein L31"/>
    <property type="match status" value="1"/>
</dbReference>
<dbReference type="HAMAP" id="MF_00501">
    <property type="entry name" value="Ribosomal_bL31_1"/>
    <property type="match status" value="1"/>
</dbReference>
<dbReference type="InterPro" id="IPR034704">
    <property type="entry name" value="Ribosomal_bL28/bL31-like_sf"/>
</dbReference>
<dbReference type="InterPro" id="IPR002150">
    <property type="entry name" value="Ribosomal_bL31"/>
</dbReference>
<dbReference type="InterPro" id="IPR027491">
    <property type="entry name" value="Ribosomal_bL31_A"/>
</dbReference>
<dbReference type="InterPro" id="IPR042105">
    <property type="entry name" value="Ribosomal_bL31_sf"/>
</dbReference>
<dbReference type="NCBIfam" id="TIGR00105">
    <property type="entry name" value="L31"/>
    <property type="match status" value="1"/>
</dbReference>
<dbReference type="NCBIfam" id="NF000612">
    <property type="entry name" value="PRK00019.1"/>
    <property type="match status" value="1"/>
</dbReference>
<dbReference type="NCBIfam" id="NF001809">
    <property type="entry name" value="PRK00528.1"/>
    <property type="match status" value="1"/>
</dbReference>
<dbReference type="PANTHER" id="PTHR33280">
    <property type="entry name" value="50S RIBOSOMAL PROTEIN L31, CHLOROPLASTIC"/>
    <property type="match status" value="1"/>
</dbReference>
<dbReference type="PANTHER" id="PTHR33280:SF1">
    <property type="entry name" value="LARGE RIBOSOMAL SUBUNIT PROTEIN BL31C"/>
    <property type="match status" value="1"/>
</dbReference>
<dbReference type="Pfam" id="PF01197">
    <property type="entry name" value="Ribosomal_L31"/>
    <property type="match status" value="1"/>
</dbReference>
<dbReference type="PRINTS" id="PR01249">
    <property type="entry name" value="RIBOSOMALL31"/>
</dbReference>
<dbReference type="SUPFAM" id="SSF143800">
    <property type="entry name" value="L28p-like"/>
    <property type="match status" value="1"/>
</dbReference>
<dbReference type="PROSITE" id="PS01143">
    <property type="entry name" value="RIBOSOMAL_L31"/>
    <property type="match status" value="1"/>
</dbReference>
<accession>B2TJY1</accession>
<organism>
    <name type="scientific">Clostridium botulinum (strain Eklund 17B / Type B)</name>
    <dbReference type="NCBI Taxonomy" id="935198"/>
    <lineage>
        <taxon>Bacteria</taxon>
        <taxon>Bacillati</taxon>
        <taxon>Bacillota</taxon>
        <taxon>Clostridia</taxon>
        <taxon>Eubacteriales</taxon>
        <taxon>Clostridiaceae</taxon>
        <taxon>Clostridium</taxon>
    </lineage>
</organism>
<comment type="function">
    <text evidence="1">Binds the 23S rRNA.</text>
</comment>
<comment type="cofactor">
    <cofactor evidence="1">
        <name>Zn(2+)</name>
        <dbReference type="ChEBI" id="CHEBI:29105"/>
    </cofactor>
    <text evidence="1">Binds 1 zinc ion per subunit.</text>
</comment>
<comment type="subunit">
    <text evidence="1">Part of the 50S ribosomal subunit.</text>
</comment>
<comment type="similarity">
    <text evidence="1">Belongs to the bacterial ribosomal protein bL31 family. Type A subfamily.</text>
</comment>
<protein>
    <recommendedName>
        <fullName evidence="1">Large ribosomal subunit protein bL31</fullName>
    </recommendedName>
    <alternativeName>
        <fullName evidence="2">50S ribosomal protein L31</fullName>
    </alternativeName>
</protein>
<proteinExistence type="inferred from homology"/>
<feature type="chain" id="PRO_1000126591" description="Large ribosomal subunit protein bL31">
    <location>
        <begin position="1"/>
        <end position="69"/>
    </location>
</feature>
<feature type="binding site" evidence="1">
    <location>
        <position position="17"/>
    </location>
    <ligand>
        <name>Zn(2+)</name>
        <dbReference type="ChEBI" id="CHEBI:29105"/>
    </ligand>
</feature>
<feature type="binding site" evidence="1">
    <location>
        <position position="19"/>
    </location>
    <ligand>
        <name>Zn(2+)</name>
        <dbReference type="ChEBI" id="CHEBI:29105"/>
    </ligand>
</feature>
<feature type="binding site" evidence="1">
    <location>
        <position position="37"/>
    </location>
    <ligand>
        <name>Zn(2+)</name>
        <dbReference type="ChEBI" id="CHEBI:29105"/>
    </ligand>
</feature>
<feature type="binding site" evidence="1">
    <location>
        <position position="40"/>
    </location>
    <ligand>
        <name>Zn(2+)</name>
        <dbReference type="ChEBI" id="CHEBI:29105"/>
    </ligand>
</feature>
<name>RL31_CLOBB</name>